<reference key="1">
    <citation type="journal article" date="2009" name="Proc. Natl. Acad. Sci. U.S.A.">
        <title>Hamiltonella defensa, genome evolution of protective bacterial endosymbiont from pathogenic ancestors.</title>
        <authorList>
            <person name="Degnan P.H."/>
            <person name="Yu Y."/>
            <person name="Sisneros N."/>
            <person name="Wing R.A."/>
            <person name="Moran N.A."/>
        </authorList>
    </citation>
    <scope>NUCLEOTIDE SEQUENCE [LARGE SCALE GENOMIC DNA]</scope>
    <source>
        <strain>5AT</strain>
    </source>
</reference>
<name>EFP_HAMD5</name>
<evidence type="ECO:0000255" key="1">
    <source>
        <dbReference type="HAMAP-Rule" id="MF_00141"/>
    </source>
</evidence>
<protein>
    <recommendedName>
        <fullName evidence="1">Elongation factor P</fullName>
        <shortName evidence="1">EF-P</shortName>
    </recommendedName>
</protein>
<proteinExistence type="inferred from homology"/>
<gene>
    <name evidence="1" type="primary">efp</name>
    <name type="ordered locus">HDEF_1895</name>
</gene>
<sequence length="188" mass="20612">MATYSSNEFRSGLKIMLDGEPCSIIESEFVKPGKGQAFVRTRIRKLISGKLLEKTFKSTDSVEGADVVDMNLIYLYNDGDFWHFMNNDTFEQLAADVKATGESAKWLVEQAECILTLWNGQPISVTPPNFVELQIVDTDPGLKGDTAGTGGKPATLTTGAVVKVPLFVQIGEIIKVDTRSGEYVSRVK</sequence>
<comment type="function">
    <text evidence="1">Involved in peptide bond synthesis. Alleviates ribosome stalling that occurs when 3 or more consecutive Pro residues or the sequence PPG is present in a protein, possibly by augmenting the peptidyl transferase activity of the ribosome. Modification of Lys-34 is required for alleviation.</text>
</comment>
<comment type="pathway">
    <text evidence="1">Protein biosynthesis; polypeptide chain elongation.</text>
</comment>
<comment type="subcellular location">
    <subcellularLocation>
        <location evidence="1">Cytoplasm</location>
    </subcellularLocation>
</comment>
<comment type="PTM">
    <text evidence="1">May be beta-lysylated on the epsilon-amino group of Lys-34 by the combined action of EpmA and EpmB, and then hydroxylated on the C5 position of the same residue by EpmC (if this protein is present). Lysylation is critical for the stimulatory effect of EF-P on peptide-bond formation. The lysylation moiety may extend toward the peptidyltransferase center and stabilize the terminal 3-CCA end of the tRNA. Hydroxylation of the C5 position on Lys-34 may allow additional potential stabilizing hydrogen-bond interactions with the P-tRNA.</text>
</comment>
<comment type="similarity">
    <text evidence="1">Belongs to the elongation factor P family.</text>
</comment>
<feature type="chain" id="PRO_1000203272" description="Elongation factor P">
    <location>
        <begin position="1"/>
        <end position="188"/>
    </location>
</feature>
<feature type="modified residue" description="N6-(3,6-diaminohexanoyl)-5-hydroxylysine" evidence="1">
    <location>
        <position position="34"/>
    </location>
</feature>
<dbReference type="EMBL" id="CP001277">
    <property type="protein sequence ID" value="ACQ68485.1"/>
    <property type="molecule type" value="Genomic_DNA"/>
</dbReference>
<dbReference type="RefSeq" id="WP_015874249.1">
    <property type="nucleotide sequence ID" value="NC_012751.1"/>
</dbReference>
<dbReference type="SMR" id="C4K7E2"/>
<dbReference type="STRING" id="572265.HDEF_1895"/>
<dbReference type="GeneID" id="66261475"/>
<dbReference type="KEGG" id="hde:HDEF_1895"/>
<dbReference type="eggNOG" id="COG0231">
    <property type="taxonomic scope" value="Bacteria"/>
</dbReference>
<dbReference type="HOGENOM" id="CLU_074944_0_0_6"/>
<dbReference type="UniPathway" id="UPA00345"/>
<dbReference type="Proteomes" id="UP000002334">
    <property type="component" value="Chromosome"/>
</dbReference>
<dbReference type="GO" id="GO:0005829">
    <property type="term" value="C:cytosol"/>
    <property type="evidence" value="ECO:0007669"/>
    <property type="project" value="UniProtKB-ARBA"/>
</dbReference>
<dbReference type="GO" id="GO:0003746">
    <property type="term" value="F:translation elongation factor activity"/>
    <property type="evidence" value="ECO:0007669"/>
    <property type="project" value="UniProtKB-UniRule"/>
</dbReference>
<dbReference type="GO" id="GO:0043043">
    <property type="term" value="P:peptide biosynthetic process"/>
    <property type="evidence" value="ECO:0007669"/>
    <property type="project" value="InterPro"/>
</dbReference>
<dbReference type="CDD" id="cd04470">
    <property type="entry name" value="S1_EF-P_repeat_1"/>
    <property type="match status" value="1"/>
</dbReference>
<dbReference type="CDD" id="cd05794">
    <property type="entry name" value="S1_EF-P_repeat_2"/>
    <property type="match status" value="1"/>
</dbReference>
<dbReference type="FunFam" id="2.30.30.30:FF:000003">
    <property type="entry name" value="Elongation factor P"/>
    <property type="match status" value="1"/>
</dbReference>
<dbReference type="FunFam" id="2.40.50.140:FF:000004">
    <property type="entry name" value="Elongation factor P"/>
    <property type="match status" value="1"/>
</dbReference>
<dbReference type="FunFam" id="2.40.50.140:FF:000009">
    <property type="entry name" value="Elongation factor P"/>
    <property type="match status" value="1"/>
</dbReference>
<dbReference type="Gene3D" id="2.30.30.30">
    <property type="match status" value="1"/>
</dbReference>
<dbReference type="Gene3D" id="2.40.50.140">
    <property type="entry name" value="Nucleic acid-binding proteins"/>
    <property type="match status" value="2"/>
</dbReference>
<dbReference type="HAMAP" id="MF_00141">
    <property type="entry name" value="EF_P"/>
    <property type="match status" value="1"/>
</dbReference>
<dbReference type="InterPro" id="IPR015365">
    <property type="entry name" value="Elong-fact-P_C"/>
</dbReference>
<dbReference type="InterPro" id="IPR012340">
    <property type="entry name" value="NA-bd_OB-fold"/>
</dbReference>
<dbReference type="InterPro" id="IPR014722">
    <property type="entry name" value="Rib_uL2_dom2"/>
</dbReference>
<dbReference type="InterPro" id="IPR020599">
    <property type="entry name" value="Transl_elong_fac_P/YeiP"/>
</dbReference>
<dbReference type="InterPro" id="IPR013185">
    <property type="entry name" value="Transl_elong_KOW-like"/>
</dbReference>
<dbReference type="InterPro" id="IPR001059">
    <property type="entry name" value="Transl_elong_P/YeiP_cen"/>
</dbReference>
<dbReference type="InterPro" id="IPR013852">
    <property type="entry name" value="Transl_elong_P/YeiP_CS"/>
</dbReference>
<dbReference type="InterPro" id="IPR011768">
    <property type="entry name" value="Transl_elongation_fac_P"/>
</dbReference>
<dbReference type="InterPro" id="IPR008991">
    <property type="entry name" value="Translation_prot_SH3-like_sf"/>
</dbReference>
<dbReference type="NCBIfam" id="TIGR00038">
    <property type="entry name" value="efp"/>
    <property type="match status" value="1"/>
</dbReference>
<dbReference type="NCBIfam" id="NF001810">
    <property type="entry name" value="PRK00529.1"/>
    <property type="match status" value="1"/>
</dbReference>
<dbReference type="PANTHER" id="PTHR30053">
    <property type="entry name" value="ELONGATION FACTOR P"/>
    <property type="match status" value="1"/>
</dbReference>
<dbReference type="PANTHER" id="PTHR30053:SF12">
    <property type="entry name" value="ELONGATION FACTOR P (EF-P) FAMILY PROTEIN"/>
    <property type="match status" value="1"/>
</dbReference>
<dbReference type="Pfam" id="PF01132">
    <property type="entry name" value="EFP"/>
    <property type="match status" value="1"/>
</dbReference>
<dbReference type="Pfam" id="PF08207">
    <property type="entry name" value="EFP_N"/>
    <property type="match status" value="1"/>
</dbReference>
<dbReference type="Pfam" id="PF09285">
    <property type="entry name" value="Elong-fact-P_C"/>
    <property type="match status" value="1"/>
</dbReference>
<dbReference type="PIRSF" id="PIRSF005901">
    <property type="entry name" value="EF-P"/>
    <property type="match status" value="1"/>
</dbReference>
<dbReference type="SMART" id="SM01185">
    <property type="entry name" value="EFP"/>
    <property type="match status" value="1"/>
</dbReference>
<dbReference type="SMART" id="SM00841">
    <property type="entry name" value="Elong-fact-P_C"/>
    <property type="match status" value="1"/>
</dbReference>
<dbReference type="SUPFAM" id="SSF50249">
    <property type="entry name" value="Nucleic acid-binding proteins"/>
    <property type="match status" value="2"/>
</dbReference>
<dbReference type="SUPFAM" id="SSF50104">
    <property type="entry name" value="Translation proteins SH3-like domain"/>
    <property type="match status" value="1"/>
</dbReference>
<dbReference type="PROSITE" id="PS01275">
    <property type="entry name" value="EFP"/>
    <property type="match status" value="1"/>
</dbReference>
<accession>C4K7E2</accession>
<keyword id="KW-0963">Cytoplasm</keyword>
<keyword id="KW-0251">Elongation factor</keyword>
<keyword id="KW-0379">Hydroxylation</keyword>
<keyword id="KW-0648">Protein biosynthesis</keyword>
<organism>
    <name type="scientific">Hamiltonella defensa subsp. Acyrthosiphon pisum (strain 5AT)</name>
    <dbReference type="NCBI Taxonomy" id="572265"/>
    <lineage>
        <taxon>Bacteria</taxon>
        <taxon>Pseudomonadati</taxon>
        <taxon>Pseudomonadota</taxon>
        <taxon>Gammaproteobacteria</taxon>
        <taxon>Enterobacterales</taxon>
        <taxon>Enterobacteriaceae</taxon>
        <taxon>aphid secondary symbionts</taxon>
        <taxon>Candidatus Hamiltonella</taxon>
    </lineage>
</organism>